<name>PFL2_SCHPO</name>
<accession>Q8TFG9</accession>
<accession>P78869</accession>
<accession>Q8TFG2</accession>
<evidence type="ECO:0000250" key="1">
    <source>
        <dbReference type="UniProtKB" id="O74346"/>
    </source>
</evidence>
<evidence type="ECO:0000255" key="2"/>
<evidence type="ECO:0000255" key="3">
    <source>
        <dbReference type="PROSITE-ProRule" id="PRU00498"/>
    </source>
</evidence>
<evidence type="ECO:0000256" key="4">
    <source>
        <dbReference type="SAM" id="MobiDB-lite"/>
    </source>
</evidence>
<evidence type="ECO:0000269" key="5">
    <source>
    </source>
</evidence>
<evidence type="ECO:0000303" key="6">
    <source>
    </source>
</evidence>
<evidence type="ECO:0000305" key="7"/>
<evidence type="ECO:0000312" key="8">
    <source>
        <dbReference type="PomBase" id="SPAPB15E9.01c"/>
    </source>
</evidence>
<organism>
    <name type="scientific">Schizosaccharomyces pombe (strain 972 / ATCC 24843)</name>
    <name type="common">Fission yeast</name>
    <dbReference type="NCBI Taxonomy" id="284812"/>
    <lineage>
        <taxon>Eukaryota</taxon>
        <taxon>Fungi</taxon>
        <taxon>Dikarya</taxon>
        <taxon>Ascomycota</taxon>
        <taxon>Taphrinomycotina</taxon>
        <taxon>Schizosaccharomycetes</taxon>
        <taxon>Schizosaccharomycetales</taxon>
        <taxon>Schizosaccharomycetaceae</taxon>
        <taxon>Schizosaccharomyces</taxon>
    </lineage>
</organism>
<reference key="1">
    <citation type="journal article" date="2002" name="Nature">
        <title>The genome sequence of Schizosaccharomyces pombe.</title>
        <authorList>
            <person name="Wood V."/>
            <person name="Gwilliam R."/>
            <person name="Rajandream M.A."/>
            <person name="Lyne M.H."/>
            <person name="Lyne R."/>
            <person name="Stewart A."/>
            <person name="Sgouros J.G."/>
            <person name="Peat N."/>
            <person name="Hayles J."/>
            <person name="Baker S.G."/>
            <person name="Basham D."/>
            <person name="Bowman S."/>
            <person name="Brooks K."/>
            <person name="Brown D."/>
            <person name="Brown S."/>
            <person name="Chillingworth T."/>
            <person name="Churcher C.M."/>
            <person name="Collins M."/>
            <person name="Connor R."/>
            <person name="Cronin A."/>
            <person name="Davis P."/>
            <person name="Feltwell T."/>
            <person name="Fraser A."/>
            <person name="Gentles S."/>
            <person name="Goble A."/>
            <person name="Hamlin N."/>
            <person name="Harris D.E."/>
            <person name="Hidalgo J."/>
            <person name="Hodgson G."/>
            <person name="Holroyd S."/>
            <person name="Hornsby T."/>
            <person name="Howarth S."/>
            <person name="Huckle E.J."/>
            <person name="Hunt S."/>
            <person name="Jagels K."/>
            <person name="James K.D."/>
            <person name="Jones L."/>
            <person name="Jones M."/>
            <person name="Leather S."/>
            <person name="McDonald S."/>
            <person name="McLean J."/>
            <person name="Mooney P."/>
            <person name="Moule S."/>
            <person name="Mungall K.L."/>
            <person name="Murphy L.D."/>
            <person name="Niblett D."/>
            <person name="Odell C."/>
            <person name="Oliver K."/>
            <person name="O'Neil S."/>
            <person name="Pearson D."/>
            <person name="Quail M.A."/>
            <person name="Rabbinowitsch E."/>
            <person name="Rutherford K.M."/>
            <person name="Rutter S."/>
            <person name="Saunders D."/>
            <person name="Seeger K."/>
            <person name="Sharp S."/>
            <person name="Skelton J."/>
            <person name="Simmonds M.N."/>
            <person name="Squares R."/>
            <person name="Squares S."/>
            <person name="Stevens K."/>
            <person name="Taylor K."/>
            <person name="Taylor R.G."/>
            <person name="Tivey A."/>
            <person name="Walsh S.V."/>
            <person name="Warren T."/>
            <person name="Whitehead S."/>
            <person name="Woodward J.R."/>
            <person name="Volckaert G."/>
            <person name="Aert R."/>
            <person name="Robben J."/>
            <person name="Grymonprez B."/>
            <person name="Weltjens I."/>
            <person name="Vanstreels E."/>
            <person name="Rieger M."/>
            <person name="Schaefer M."/>
            <person name="Mueller-Auer S."/>
            <person name="Gabel C."/>
            <person name="Fuchs M."/>
            <person name="Duesterhoeft A."/>
            <person name="Fritzc C."/>
            <person name="Holzer E."/>
            <person name="Moestl D."/>
            <person name="Hilbert H."/>
            <person name="Borzym K."/>
            <person name="Langer I."/>
            <person name="Beck A."/>
            <person name="Lehrach H."/>
            <person name="Reinhardt R."/>
            <person name="Pohl T.M."/>
            <person name="Eger P."/>
            <person name="Zimmermann W."/>
            <person name="Wedler H."/>
            <person name="Wambutt R."/>
            <person name="Purnelle B."/>
            <person name="Goffeau A."/>
            <person name="Cadieu E."/>
            <person name="Dreano S."/>
            <person name="Gloux S."/>
            <person name="Lelaure V."/>
            <person name="Mottier S."/>
            <person name="Galibert F."/>
            <person name="Aves S.J."/>
            <person name="Xiang Z."/>
            <person name="Hunt C."/>
            <person name="Moore K."/>
            <person name="Hurst S.M."/>
            <person name="Lucas M."/>
            <person name="Rochet M."/>
            <person name="Gaillardin C."/>
            <person name="Tallada V.A."/>
            <person name="Garzon A."/>
            <person name="Thode G."/>
            <person name="Daga R.R."/>
            <person name="Cruzado L."/>
            <person name="Jimenez J."/>
            <person name="Sanchez M."/>
            <person name="del Rey F."/>
            <person name="Benito J."/>
            <person name="Dominguez A."/>
            <person name="Revuelta J.L."/>
            <person name="Moreno S."/>
            <person name="Armstrong J."/>
            <person name="Forsburg S.L."/>
            <person name="Cerutti L."/>
            <person name="Lowe T."/>
            <person name="McCombie W.R."/>
            <person name="Paulsen I."/>
            <person name="Potashkin J."/>
            <person name="Shpakovski G.V."/>
            <person name="Ussery D."/>
            <person name="Barrell B.G."/>
            <person name="Nurse P."/>
        </authorList>
    </citation>
    <scope>NUCLEOTIDE SEQUENCE [LARGE SCALE GENOMIC DNA]</scope>
    <source>
        <strain>972 / ATCC 24843</strain>
    </source>
</reference>
<reference key="2">
    <citation type="journal article" date="1997" name="DNA Res.">
        <title>Identification of open reading frames in Schizosaccharomyces pombe cDNAs.</title>
        <authorList>
            <person name="Yoshioka S."/>
            <person name="Kato K."/>
            <person name="Nakai K."/>
            <person name="Okayama H."/>
            <person name="Nojima H."/>
        </authorList>
    </citation>
    <scope>NUCLEOTIDE SEQUENCE [LARGE SCALE MRNA] OF 718-1036</scope>
    <source>
        <strain>PR745</strain>
    </source>
</reference>
<reference key="3">
    <citation type="journal article" date="2012" name="PLoS Genet.">
        <title>Deciphering the transcriptional-regulatory network of flocculation in Schizosaccharomyces pombe.</title>
        <authorList>
            <person name="Kwon E.J."/>
            <person name="Laderoute A."/>
            <person name="Chatfield-Reed K."/>
            <person name="Vachon L."/>
            <person name="Karagiannis J."/>
            <person name="Chua G."/>
        </authorList>
    </citation>
    <scope>FUNCTION</scope>
</reference>
<feature type="signal peptide" evidence="2">
    <location>
        <begin position="1"/>
        <end position="23"/>
    </location>
</feature>
<feature type="chain" id="PRO_0000014212" description="Putative GPI-anchored protein pfl2">
    <location>
        <begin position="24"/>
        <end position="1011"/>
    </location>
</feature>
<feature type="propeptide" id="PRO_0000415888" description="Removed in mature form" evidence="2">
    <location>
        <begin position="1012"/>
        <end position="1036"/>
    </location>
</feature>
<feature type="region of interest" description="Disordered" evidence="4">
    <location>
        <begin position="88"/>
        <end position="130"/>
    </location>
</feature>
<feature type="region of interest" description="Disordered" evidence="4">
    <location>
        <begin position="147"/>
        <end position="183"/>
    </location>
</feature>
<feature type="region of interest" description="Disordered" evidence="4">
    <location>
        <begin position="243"/>
        <end position="710"/>
    </location>
</feature>
<feature type="region of interest" description="Disordered" evidence="4">
    <location>
        <begin position="722"/>
        <end position="862"/>
    </location>
</feature>
<feature type="region of interest" description="Disordered" evidence="4">
    <location>
        <begin position="885"/>
        <end position="918"/>
    </location>
</feature>
<feature type="region of interest" description="Disordered" evidence="4">
    <location>
        <begin position="978"/>
        <end position="1011"/>
    </location>
</feature>
<feature type="compositionally biased region" description="Low complexity" evidence="4">
    <location>
        <begin position="243"/>
        <end position="585"/>
    </location>
</feature>
<feature type="compositionally biased region" description="Polar residues" evidence="4">
    <location>
        <begin position="586"/>
        <end position="595"/>
    </location>
</feature>
<feature type="compositionally biased region" description="Low complexity" evidence="4">
    <location>
        <begin position="597"/>
        <end position="630"/>
    </location>
</feature>
<feature type="compositionally biased region" description="Polar residues" evidence="4">
    <location>
        <begin position="631"/>
        <end position="647"/>
    </location>
</feature>
<feature type="compositionally biased region" description="Low complexity" evidence="4">
    <location>
        <begin position="648"/>
        <end position="692"/>
    </location>
</feature>
<feature type="compositionally biased region" description="Polar residues" evidence="4">
    <location>
        <begin position="693"/>
        <end position="709"/>
    </location>
</feature>
<feature type="compositionally biased region" description="Low complexity" evidence="4">
    <location>
        <begin position="722"/>
        <end position="831"/>
    </location>
</feature>
<feature type="compositionally biased region" description="Low complexity" evidence="4">
    <location>
        <begin position="838"/>
        <end position="862"/>
    </location>
</feature>
<feature type="compositionally biased region" description="Low complexity" evidence="4">
    <location>
        <begin position="885"/>
        <end position="906"/>
    </location>
</feature>
<feature type="compositionally biased region" description="Low complexity" evidence="4">
    <location>
        <begin position="990"/>
        <end position="1011"/>
    </location>
</feature>
<feature type="lipid moiety-binding region" description="GPI-anchor amidated serine" evidence="2">
    <location>
        <position position="1011"/>
    </location>
</feature>
<feature type="glycosylation site" description="N-linked (GlcNAc...) asparagine" evidence="3">
    <location>
        <position position="66"/>
    </location>
</feature>
<feature type="glycosylation site" description="N-linked (GlcNAc...) asparagine" evidence="3">
    <location>
        <position position="97"/>
    </location>
</feature>
<feature type="glycosylation site" description="N-linked (GlcNAc...) asparagine" evidence="3">
    <location>
        <position position="165"/>
    </location>
</feature>
<feature type="glycosylation site" description="N-linked (GlcNAc...) asparagine" evidence="3">
    <location>
        <position position="201"/>
    </location>
</feature>
<feature type="glycosylation site" description="N-linked (GlcNAc...) asparagine" evidence="3">
    <location>
        <position position="233"/>
    </location>
</feature>
<feature type="glycosylation site" description="N-linked (GlcNAc...) asparagine" evidence="3">
    <location>
        <position position="259"/>
    </location>
</feature>
<feature type="glycosylation site" description="N-linked (GlcNAc...) asparagine" evidence="3">
    <location>
        <position position="277"/>
    </location>
</feature>
<feature type="glycosylation site" description="N-linked (GlcNAc...) asparagine" evidence="3">
    <location>
        <position position="296"/>
    </location>
</feature>
<feature type="glycosylation site" description="N-linked (GlcNAc...) asparagine" evidence="3">
    <location>
        <position position="312"/>
    </location>
</feature>
<feature type="glycosylation site" description="N-linked (GlcNAc...) asparagine" evidence="3">
    <location>
        <position position="331"/>
    </location>
</feature>
<feature type="glycosylation site" description="N-linked (GlcNAc...) asparagine" evidence="3">
    <location>
        <position position="347"/>
    </location>
</feature>
<feature type="glycosylation site" description="N-linked (GlcNAc...) asparagine" evidence="3">
    <location>
        <position position="363"/>
    </location>
</feature>
<feature type="glycosylation site" description="N-linked (GlcNAc...) asparagine" evidence="3">
    <location>
        <position position="379"/>
    </location>
</feature>
<feature type="glycosylation site" description="N-linked (GlcNAc...) asparagine" evidence="3">
    <location>
        <position position="395"/>
    </location>
</feature>
<feature type="glycosylation site" description="N-linked (GlcNAc...) asparagine" evidence="3">
    <location>
        <position position="410"/>
    </location>
</feature>
<feature type="glycosylation site" description="N-linked (GlcNAc...) asparagine" evidence="3">
    <location>
        <position position="429"/>
    </location>
</feature>
<feature type="glycosylation site" description="N-linked (GlcNAc...) asparagine" evidence="3">
    <location>
        <position position="445"/>
    </location>
</feature>
<feature type="glycosylation site" description="N-linked (GlcNAc...) asparagine" evidence="3">
    <location>
        <position position="461"/>
    </location>
</feature>
<feature type="glycosylation site" description="N-linked (GlcNAc...) asparagine" evidence="3">
    <location>
        <position position="477"/>
    </location>
</feature>
<feature type="glycosylation site" description="N-linked (GlcNAc...) asparagine" evidence="3">
    <location>
        <position position="493"/>
    </location>
</feature>
<feature type="glycosylation site" description="N-linked (GlcNAc...) asparagine" evidence="3">
    <location>
        <position position="509"/>
    </location>
</feature>
<feature type="glycosylation site" description="N-linked (GlcNAc...) asparagine" evidence="3">
    <location>
        <position position="524"/>
    </location>
</feature>
<feature type="glycosylation site" description="N-linked (GlcNAc...) asparagine" evidence="3">
    <location>
        <position position="543"/>
    </location>
</feature>
<feature type="glycosylation site" description="N-linked (GlcNAc...) asparagine" evidence="3">
    <location>
        <position position="559"/>
    </location>
</feature>
<feature type="glycosylation site" description="N-linked (GlcNAc...) asparagine" evidence="3">
    <location>
        <position position="573"/>
    </location>
</feature>
<feature type="glycosylation site" description="N-linked (GlcNAc...) asparagine" evidence="3">
    <location>
        <position position="611"/>
    </location>
</feature>
<feature type="glycosylation site" description="N-linked (GlcNAc...) asparagine" evidence="3">
    <location>
        <position position="626"/>
    </location>
</feature>
<feature type="glycosylation site" description="N-linked (GlcNAc...) asparagine" evidence="3">
    <location>
        <position position="642"/>
    </location>
</feature>
<feature type="glycosylation site" description="N-linked (GlcNAc...) asparagine" evidence="3">
    <location>
        <position position="657"/>
    </location>
</feature>
<feature type="glycosylation site" description="N-linked (GlcNAc...) asparagine" evidence="3">
    <location>
        <position position="673"/>
    </location>
</feature>
<feature type="glycosylation site" description="N-linked (GlcNAc...) asparagine" evidence="3">
    <location>
        <position position="688"/>
    </location>
</feature>
<feature type="glycosylation site" description="N-linked (GlcNAc...) asparagine" evidence="3">
    <location>
        <position position="704"/>
    </location>
</feature>
<feature type="glycosylation site" description="N-linked (GlcNAc...) asparagine" evidence="3">
    <location>
        <position position="719"/>
    </location>
</feature>
<feature type="glycosylation site" description="N-linked (GlcNAc...) asparagine" evidence="3">
    <location>
        <position position="735"/>
    </location>
</feature>
<feature type="glycosylation site" description="N-linked (GlcNAc...) asparagine" evidence="3">
    <location>
        <position position="918"/>
    </location>
</feature>
<feature type="glycosylation site" description="N-linked (GlcNAc...) asparagine" evidence="3">
    <location>
        <position position="924"/>
    </location>
</feature>
<feature type="glycosylation site" description="N-linked (GlcNAc...) asparagine" evidence="3">
    <location>
        <position position="930"/>
    </location>
</feature>
<feature type="glycosylation site" description="N-linked (GlcNAc...) asparagine" evidence="3">
    <location>
        <position position="933"/>
    </location>
</feature>
<feature type="glycosylation site" description="N-linked (GlcNAc...) asparagine" evidence="3">
    <location>
        <position position="939"/>
    </location>
</feature>
<feature type="glycosylation site" description="N-linked (GlcNAc...) asparagine" evidence="3">
    <location>
        <position position="947"/>
    </location>
</feature>
<feature type="glycosylation site" description="N-linked (GlcNAc...) asparagine" evidence="3">
    <location>
        <position position="977"/>
    </location>
</feature>
<feature type="sequence conflict" description="In Ref. 2; BAA13880." evidence="7" ref="2">
    <original>TA</original>
    <variation>SV</variation>
    <location>
        <begin position="858"/>
        <end position="859"/>
    </location>
</feature>
<feature type="sequence conflict" description="In Ref. 2; BAA13880." evidence="7" ref="2">
    <original>N</original>
    <variation>Y</variation>
    <location>
        <position position="888"/>
    </location>
</feature>
<sequence>MKFFTASTLFLLAAQSLNSGVSASLSDPANTPTILADDIVHGYTPATYLSSVPTLLKRATTSYNYNTSSASSSSLTSSSAASSSLTSSSSLASSSTNSTTSASPTSSSLTSSSATSSSLASSSTTSSSLASSSITSSSLASSSITSSSLASSSTTSSSLASSSTNSTTSATPTSSATSSSLSSTAASNSATSSSLASSSLNSTTSATATSSSLSSTAASNSATSSSLASSSLNSTTSATATSSSISSTVSSSTPLTSSNSTTAATSASATSSSAQYNTSSLLPSSTPSSTPLSSANSTTATSASSTPLTSVNSTTTTSASSTPLSSVSSANSTTATSTSSTPLSSVNSTTATSASSTPLTSVNSTTATSASSTPLTSVNSTSATSASSTPLTSANSTTSTSVSSTAPSYNTSSVLPTSSVSSTPLSSANSTTATSASSTPLSSVNSTTATSASSTPLSSVNSTTATSASSTPLTSVNSTTATSASSTPLTSVNSTSATSASSTPLTSANSTTSTSVSSTAPSYNTSSVLPTSSVSSTPLSSANSTTATSASSTPLTSVNSTTATSASSTPFGNSTITSSASGSTGEFTNTNSGNGDVSGSVTTPTSTPLSNSTVAPTSTFTSSGFNTTSGLPTSSASTPLSNSTVAPTSTFTSSGFNTTSGLPTSSASTPSSNSSIVPTSTFTSSGFNTTSGLPTSSASTPLSNSTVAPTSTFTSSGFNTTSGLPTSSVSTPLSNSSAYPSSGSSTFSRLSSTLTSSIIPTETFGSTSGSATGTRPTGSSSQGSVVPTTSTGSSVTSTGTGTTTGVTEVTETSTFETTEIITSTIEPTTASGTGGGNPTAAPTNEPTVTTGTETTEGTATYTEPTTFTSTFSFTTTIIGGTTTIIPVNPGNPSSSVSAPPTTSFTPGPGGSGYPSYSNTTQGMNTTSIWNSSNSTIVSNVTATITGNVTITTGDLTTIDPTTFTSTYLSSGFQTVSNTTATSGSDDDVKTASTSSSTSYTSSSSSSSSTTSAASSKASVSMGLNGLMIAAVILLVA</sequence>
<protein>
    <recommendedName>
        <fullName evidence="7">Putative GPI-anchored protein pfl2</fullName>
    </recommendedName>
    <alternativeName>
        <fullName evidence="6">Pombe flocculin 2</fullName>
    </alternativeName>
</protein>
<comment type="function">
    <text evidence="1 5">May be involved in agglutination during conjugation or other aspects of colony formation (By similarity). Induces flocculation when overexpressed (PubMed:23236291).</text>
</comment>
<comment type="subcellular location">
    <subcellularLocation>
        <location evidence="2">Cell membrane</location>
        <topology evidence="2">Lipid-anchor</topology>
        <topology evidence="2">GPI-anchor</topology>
    </subcellularLocation>
</comment>
<dbReference type="EMBL" id="CU329670">
    <property type="protein sequence ID" value="CAD27472.2"/>
    <property type="molecule type" value="Genomic_DNA"/>
</dbReference>
<dbReference type="EMBL" id="D89219">
    <property type="protein sequence ID" value="BAA13880.1"/>
    <property type="molecule type" value="mRNA"/>
</dbReference>
<dbReference type="PIR" id="T43040">
    <property type="entry name" value="T43040"/>
</dbReference>
<dbReference type="RefSeq" id="XP_001713096.1">
    <property type="nucleotide sequence ID" value="XM_001713044.2"/>
</dbReference>
<dbReference type="BioGRID" id="858075">
    <property type="interactions" value="1"/>
</dbReference>
<dbReference type="STRING" id="284812.Q8TFG9"/>
<dbReference type="GlyCosmos" id="Q8TFG9">
    <property type="glycosylation" value="41 sites, No reported glycans"/>
</dbReference>
<dbReference type="PaxDb" id="4896-SPAPB15E9.01c.1"/>
<dbReference type="EnsemblFungi" id="SPAPB15E9.01c.1">
    <property type="protein sequence ID" value="SPAPB15E9.01c.1:pep"/>
    <property type="gene ID" value="SPAPB15E9.01c"/>
</dbReference>
<dbReference type="PomBase" id="SPAPB15E9.01c">
    <property type="gene designation" value="pfl2"/>
</dbReference>
<dbReference type="VEuPathDB" id="FungiDB:SPAPB15E9.01c"/>
<dbReference type="HOGENOM" id="CLU_293405_0_0_1"/>
<dbReference type="InParanoid" id="Q8TFG9"/>
<dbReference type="OMA" id="VAPHRNT"/>
<dbReference type="PRO" id="PR:Q8TFG9"/>
<dbReference type="Proteomes" id="UP000002485">
    <property type="component" value="Chromosome I"/>
</dbReference>
<dbReference type="GO" id="GO:0009897">
    <property type="term" value="C:external side of plasma membrane"/>
    <property type="evidence" value="ECO:0000304"/>
    <property type="project" value="PomBase"/>
</dbReference>
<dbReference type="GO" id="GO:0098631">
    <property type="term" value="F:cell adhesion mediator activity"/>
    <property type="evidence" value="ECO:0000250"/>
    <property type="project" value="PomBase"/>
</dbReference>
<dbReference type="GO" id="GO:0000128">
    <property type="term" value="P:flocculation"/>
    <property type="evidence" value="ECO:0000315"/>
    <property type="project" value="PomBase"/>
</dbReference>
<gene>
    <name evidence="6" type="primary">pfl2</name>
    <name evidence="8" type="ORF">SPAPB15E9.01c</name>
    <name type="ORF">SPAPB18E9.06c</name>
</gene>
<keyword id="KW-1003">Cell membrane</keyword>
<keyword id="KW-0325">Glycoprotein</keyword>
<keyword id="KW-0336">GPI-anchor</keyword>
<keyword id="KW-0449">Lipoprotein</keyword>
<keyword id="KW-0472">Membrane</keyword>
<keyword id="KW-1185">Reference proteome</keyword>
<keyword id="KW-0732">Signal</keyword>
<proteinExistence type="evidence at transcript level"/>